<protein>
    <recommendedName>
        <fullName evidence="2">Small ribosomal subunit protein eS24z</fullName>
    </recommendedName>
    <alternativeName>
        <fullName>40S ribosomal protein S24-1</fullName>
    </alternativeName>
</protein>
<dbReference type="EMBL" id="AC009465">
    <property type="protein sequence ID" value="AAG51413.1"/>
    <property type="molecule type" value="Genomic_DNA"/>
</dbReference>
<dbReference type="EMBL" id="CP002686">
    <property type="protein sequence ID" value="AEE74158.1"/>
    <property type="molecule type" value="Genomic_DNA"/>
</dbReference>
<dbReference type="EMBL" id="AY050364">
    <property type="protein sequence ID" value="AAK91381.1"/>
    <property type="molecule type" value="mRNA"/>
</dbReference>
<dbReference type="EMBL" id="AY062671">
    <property type="protein sequence ID" value="AAL32749.1"/>
    <property type="molecule type" value="mRNA"/>
</dbReference>
<dbReference type="EMBL" id="AY093332">
    <property type="protein sequence ID" value="AAM13331.1"/>
    <property type="molecule type" value="mRNA"/>
</dbReference>
<dbReference type="EMBL" id="AY094044">
    <property type="protein sequence ID" value="AAM16200.1"/>
    <property type="molecule type" value="mRNA"/>
</dbReference>
<dbReference type="EMBL" id="AY086479">
    <property type="protein sequence ID" value="AAM63481.1"/>
    <property type="molecule type" value="mRNA"/>
</dbReference>
<dbReference type="RefSeq" id="NP_187143.1">
    <property type="nucleotide sequence ID" value="NM_111364.3"/>
</dbReference>
<dbReference type="SMR" id="Q9SS17"/>
<dbReference type="BioGRID" id="4987">
    <property type="interactions" value="149"/>
</dbReference>
<dbReference type="FunCoup" id="Q9SS17">
    <property type="interactions" value="3522"/>
</dbReference>
<dbReference type="IntAct" id="Q9SS17">
    <property type="interactions" value="11"/>
</dbReference>
<dbReference type="STRING" id="3702.Q9SS17"/>
<dbReference type="MetOSite" id="Q9SS17"/>
<dbReference type="PaxDb" id="3702-AT3G04920.1"/>
<dbReference type="EnsemblPlants" id="AT3G04920.1">
    <property type="protein sequence ID" value="AT3G04920.1"/>
    <property type="gene ID" value="AT3G04920"/>
</dbReference>
<dbReference type="GeneID" id="819652"/>
<dbReference type="Gramene" id="AT3G04920.1">
    <property type="protein sequence ID" value="AT3G04920.1"/>
    <property type="gene ID" value="AT3G04920"/>
</dbReference>
<dbReference type="KEGG" id="ath:AT3G04920"/>
<dbReference type="Araport" id="AT3G04920"/>
<dbReference type="TAIR" id="AT3G04920"/>
<dbReference type="eggNOG" id="KOG3424">
    <property type="taxonomic scope" value="Eukaryota"/>
</dbReference>
<dbReference type="HOGENOM" id="CLU_107248_1_0_1"/>
<dbReference type="InParanoid" id="Q9SS17"/>
<dbReference type="OMA" id="RKPRERC"/>
<dbReference type="OrthoDB" id="1051416at2759"/>
<dbReference type="PhylomeDB" id="Q9SS17"/>
<dbReference type="CD-CODE" id="4299E36E">
    <property type="entry name" value="Nucleolus"/>
</dbReference>
<dbReference type="PRO" id="PR:Q9SS17"/>
<dbReference type="Proteomes" id="UP000006548">
    <property type="component" value="Chromosome 3"/>
</dbReference>
<dbReference type="ExpressionAtlas" id="Q9SS17">
    <property type="expression patterns" value="baseline and differential"/>
</dbReference>
<dbReference type="GO" id="GO:0009507">
    <property type="term" value="C:chloroplast"/>
    <property type="evidence" value="ECO:0007005"/>
    <property type="project" value="TAIR"/>
</dbReference>
<dbReference type="GO" id="GO:0005829">
    <property type="term" value="C:cytosol"/>
    <property type="evidence" value="ECO:0007005"/>
    <property type="project" value="TAIR"/>
</dbReference>
<dbReference type="GO" id="GO:0022626">
    <property type="term" value="C:cytosolic ribosome"/>
    <property type="evidence" value="ECO:0007005"/>
    <property type="project" value="TAIR"/>
</dbReference>
<dbReference type="GO" id="GO:0022627">
    <property type="term" value="C:cytosolic small ribosomal subunit"/>
    <property type="evidence" value="ECO:0007005"/>
    <property type="project" value="TAIR"/>
</dbReference>
<dbReference type="GO" id="GO:0005730">
    <property type="term" value="C:nucleolus"/>
    <property type="evidence" value="ECO:0007005"/>
    <property type="project" value="TAIR"/>
</dbReference>
<dbReference type="GO" id="GO:0000325">
    <property type="term" value="C:plant-type vacuole"/>
    <property type="evidence" value="ECO:0007005"/>
    <property type="project" value="TAIR"/>
</dbReference>
<dbReference type="GO" id="GO:0003729">
    <property type="term" value="F:mRNA binding"/>
    <property type="evidence" value="ECO:0000314"/>
    <property type="project" value="TAIR"/>
</dbReference>
<dbReference type="GO" id="GO:0003735">
    <property type="term" value="F:structural constituent of ribosome"/>
    <property type="evidence" value="ECO:0000314"/>
    <property type="project" value="CAFA"/>
</dbReference>
<dbReference type="GO" id="GO:0006412">
    <property type="term" value="P:translation"/>
    <property type="evidence" value="ECO:0007669"/>
    <property type="project" value="InterPro"/>
</dbReference>
<dbReference type="FunFam" id="3.30.70.3370:FF:000001">
    <property type="entry name" value="40S ribosomal protein S24"/>
    <property type="match status" value="1"/>
</dbReference>
<dbReference type="Gene3D" id="3.30.70.3370">
    <property type="match status" value="1"/>
</dbReference>
<dbReference type="HAMAP" id="MF_00545">
    <property type="entry name" value="Ribosomal_eS24"/>
    <property type="match status" value="1"/>
</dbReference>
<dbReference type="InterPro" id="IPR053709">
    <property type="entry name" value="eRP_eS24_sf"/>
</dbReference>
<dbReference type="InterPro" id="IPR001976">
    <property type="entry name" value="Ribosomal_eS24"/>
</dbReference>
<dbReference type="InterPro" id="IPR018098">
    <property type="entry name" value="Ribosomal_eS24_CS"/>
</dbReference>
<dbReference type="InterPro" id="IPR012678">
    <property type="entry name" value="Ribosomal_uL23/eL15/eS24_sf"/>
</dbReference>
<dbReference type="PANTHER" id="PTHR10496">
    <property type="entry name" value="40S RIBOSOMAL PROTEIN S24"/>
    <property type="match status" value="1"/>
</dbReference>
<dbReference type="Pfam" id="PF01282">
    <property type="entry name" value="Ribosomal_S24e"/>
    <property type="match status" value="1"/>
</dbReference>
<dbReference type="SUPFAM" id="SSF54189">
    <property type="entry name" value="Ribosomal proteins S24e, L23 and L15e"/>
    <property type="match status" value="1"/>
</dbReference>
<dbReference type="PROSITE" id="PS00529">
    <property type="entry name" value="RIBOSOMAL_S24E"/>
    <property type="match status" value="1"/>
</dbReference>
<sequence length="133" mass="15372">MAEKAVTIRTRKFMTNRLLSRKQFVIDVLHPGRANVSKAELKEKLARMYEVKDPNAIFVFKFRTHFGGGKSSGFGLIYDTVESAKKFEPKYRLIRNGLDTKIEKSRKQIKERKNRAKKIRGVKKTKAGDAKKK</sequence>
<feature type="chain" id="PRO_0000137632" description="Small ribosomal subunit protein eS24z">
    <location>
        <begin position="1"/>
        <end position="133"/>
    </location>
</feature>
<feature type="region of interest" description="Disordered" evidence="1">
    <location>
        <begin position="104"/>
        <end position="133"/>
    </location>
</feature>
<feature type="compositionally biased region" description="Basic residues" evidence="1">
    <location>
        <begin position="109"/>
        <end position="125"/>
    </location>
</feature>
<gene>
    <name type="primary">RPS24A</name>
    <name type="ordered locus">At3g04920</name>
    <name type="ORF">T9J14.13</name>
</gene>
<evidence type="ECO:0000256" key="1">
    <source>
        <dbReference type="SAM" id="MobiDB-lite"/>
    </source>
</evidence>
<evidence type="ECO:0000303" key="2">
    <source>
    </source>
</evidence>
<evidence type="ECO:0000305" key="3"/>
<accession>Q9SS17</accession>
<name>RS241_ARATH</name>
<comment type="similarity">
    <text evidence="3">Belongs to the eukaryotic ribosomal protein eS24 family.</text>
</comment>
<organism>
    <name type="scientific">Arabidopsis thaliana</name>
    <name type="common">Mouse-ear cress</name>
    <dbReference type="NCBI Taxonomy" id="3702"/>
    <lineage>
        <taxon>Eukaryota</taxon>
        <taxon>Viridiplantae</taxon>
        <taxon>Streptophyta</taxon>
        <taxon>Embryophyta</taxon>
        <taxon>Tracheophyta</taxon>
        <taxon>Spermatophyta</taxon>
        <taxon>Magnoliopsida</taxon>
        <taxon>eudicotyledons</taxon>
        <taxon>Gunneridae</taxon>
        <taxon>Pentapetalae</taxon>
        <taxon>rosids</taxon>
        <taxon>malvids</taxon>
        <taxon>Brassicales</taxon>
        <taxon>Brassicaceae</taxon>
        <taxon>Camelineae</taxon>
        <taxon>Arabidopsis</taxon>
    </lineage>
</organism>
<keyword id="KW-1185">Reference proteome</keyword>
<keyword id="KW-0687">Ribonucleoprotein</keyword>
<keyword id="KW-0689">Ribosomal protein</keyword>
<proteinExistence type="evidence at transcript level"/>
<reference key="1">
    <citation type="journal article" date="2000" name="Nature">
        <title>Sequence and analysis of chromosome 3 of the plant Arabidopsis thaliana.</title>
        <authorList>
            <person name="Salanoubat M."/>
            <person name="Lemcke K."/>
            <person name="Rieger M."/>
            <person name="Ansorge W."/>
            <person name="Unseld M."/>
            <person name="Fartmann B."/>
            <person name="Valle G."/>
            <person name="Bloecker H."/>
            <person name="Perez-Alonso M."/>
            <person name="Obermaier B."/>
            <person name="Delseny M."/>
            <person name="Boutry M."/>
            <person name="Grivell L.A."/>
            <person name="Mache R."/>
            <person name="Puigdomenech P."/>
            <person name="De Simone V."/>
            <person name="Choisne N."/>
            <person name="Artiguenave F."/>
            <person name="Robert C."/>
            <person name="Brottier P."/>
            <person name="Wincker P."/>
            <person name="Cattolico L."/>
            <person name="Weissenbach J."/>
            <person name="Saurin W."/>
            <person name="Quetier F."/>
            <person name="Schaefer M."/>
            <person name="Mueller-Auer S."/>
            <person name="Gabel C."/>
            <person name="Fuchs M."/>
            <person name="Benes V."/>
            <person name="Wurmbach E."/>
            <person name="Drzonek H."/>
            <person name="Erfle H."/>
            <person name="Jordan N."/>
            <person name="Bangert S."/>
            <person name="Wiedelmann R."/>
            <person name="Kranz H."/>
            <person name="Voss H."/>
            <person name="Holland R."/>
            <person name="Brandt P."/>
            <person name="Nyakatura G."/>
            <person name="Vezzi A."/>
            <person name="D'Angelo M."/>
            <person name="Pallavicini A."/>
            <person name="Toppo S."/>
            <person name="Simionati B."/>
            <person name="Conrad A."/>
            <person name="Hornischer K."/>
            <person name="Kauer G."/>
            <person name="Loehnert T.-H."/>
            <person name="Nordsiek G."/>
            <person name="Reichelt J."/>
            <person name="Scharfe M."/>
            <person name="Schoen O."/>
            <person name="Bargues M."/>
            <person name="Terol J."/>
            <person name="Climent J."/>
            <person name="Navarro P."/>
            <person name="Collado C."/>
            <person name="Perez-Perez A."/>
            <person name="Ottenwaelder B."/>
            <person name="Duchemin D."/>
            <person name="Cooke R."/>
            <person name="Laudie M."/>
            <person name="Berger-Llauro C."/>
            <person name="Purnelle B."/>
            <person name="Masuy D."/>
            <person name="de Haan M."/>
            <person name="Maarse A.C."/>
            <person name="Alcaraz J.-P."/>
            <person name="Cottet A."/>
            <person name="Casacuberta E."/>
            <person name="Monfort A."/>
            <person name="Argiriou A."/>
            <person name="Flores M."/>
            <person name="Liguori R."/>
            <person name="Vitale D."/>
            <person name="Mannhaupt G."/>
            <person name="Haase D."/>
            <person name="Schoof H."/>
            <person name="Rudd S."/>
            <person name="Zaccaria P."/>
            <person name="Mewes H.-W."/>
            <person name="Mayer K.F.X."/>
            <person name="Kaul S."/>
            <person name="Town C.D."/>
            <person name="Koo H.L."/>
            <person name="Tallon L.J."/>
            <person name="Jenkins J."/>
            <person name="Rooney T."/>
            <person name="Rizzo M."/>
            <person name="Walts A."/>
            <person name="Utterback T."/>
            <person name="Fujii C.Y."/>
            <person name="Shea T.P."/>
            <person name="Creasy T.H."/>
            <person name="Haas B."/>
            <person name="Maiti R."/>
            <person name="Wu D."/>
            <person name="Peterson J."/>
            <person name="Van Aken S."/>
            <person name="Pai G."/>
            <person name="Militscher J."/>
            <person name="Sellers P."/>
            <person name="Gill J.E."/>
            <person name="Feldblyum T.V."/>
            <person name="Preuss D."/>
            <person name="Lin X."/>
            <person name="Nierman W.C."/>
            <person name="Salzberg S.L."/>
            <person name="White O."/>
            <person name="Venter J.C."/>
            <person name="Fraser C.M."/>
            <person name="Kaneko T."/>
            <person name="Nakamura Y."/>
            <person name="Sato S."/>
            <person name="Kato T."/>
            <person name="Asamizu E."/>
            <person name="Sasamoto S."/>
            <person name="Kimura T."/>
            <person name="Idesawa K."/>
            <person name="Kawashima K."/>
            <person name="Kishida Y."/>
            <person name="Kiyokawa C."/>
            <person name="Kohara M."/>
            <person name="Matsumoto M."/>
            <person name="Matsuno A."/>
            <person name="Muraki A."/>
            <person name="Nakayama S."/>
            <person name="Nakazaki N."/>
            <person name="Shinpo S."/>
            <person name="Takeuchi C."/>
            <person name="Wada T."/>
            <person name="Watanabe A."/>
            <person name="Yamada M."/>
            <person name="Yasuda M."/>
            <person name="Tabata S."/>
        </authorList>
    </citation>
    <scope>NUCLEOTIDE SEQUENCE [LARGE SCALE GENOMIC DNA]</scope>
    <source>
        <strain>cv. Columbia</strain>
    </source>
</reference>
<reference key="2">
    <citation type="journal article" date="2017" name="Plant J.">
        <title>Araport11: a complete reannotation of the Arabidopsis thaliana reference genome.</title>
        <authorList>
            <person name="Cheng C.Y."/>
            <person name="Krishnakumar V."/>
            <person name="Chan A.P."/>
            <person name="Thibaud-Nissen F."/>
            <person name="Schobel S."/>
            <person name="Town C.D."/>
        </authorList>
    </citation>
    <scope>GENOME REANNOTATION</scope>
    <source>
        <strain>cv. Columbia</strain>
    </source>
</reference>
<reference key="3">
    <citation type="journal article" date="2003" name="Science">
        <title>Empirical analysis of transcriptional activity in the Arabidopsis genome.</title>
        <authorList>
            <person name="Yamada K."/>
            <person name="Lim J."/>
            <person name="Dale J.M."/>
            <person name="Chen H."/>
            <person name="Shinn P."/>
            <person name="Palm C.J."/>
            <person name="Southwick A.M."/>
            <person name="Wu H.C."/>
            <person name="Kim C.J."/>
            <person name="Nguyen M."/>
            <person name="Pham P.K."/>
            <person name="Cheuk R.F."/>
            <person name="Karlin-Newmann G."/>
            <person name="Liu S.X."/>
            <person name="Lam B."/>
            <person name="Sakano H."/>
            <person name="Wu T."/>
            <person name="Yu G."/>
            <person name="Miranda M."/>
            <person name="Quach H.L."/>
            <person name="Tripp M."/>
            <person name="Chang C.H."/>
            <person name="Lee J.M."/>
            <person name="Toriumi M.J."/>
            <person name="Chan M.M."/>
            <person name="Tang C.C."/>
            <person name="Onodera C.S."/>
            <person name="Deng J.M."/>
            <person name="Akiyama K."/>
            <person name="Ansari Y."/>
            <person name="Arakawa T."/>
            <person name="Banh J."/>
            <person name="Banno F."/>
            <person name="Bowser L."/>
            <person name="Brooks S.Y."/>
            <person name="Carninci P."/>
            <person name="Chao Q."/>
            <person name="Choy N."/>
            <person name="Enju A."/>
            <person name="Goldsmith A.D."/>
            <person name="Gurjal M."/>
            <person name="Hansen N.F."/>
            <person name="Hayashizaki Y."/>
            <person name="Johnson-Hopson C."/>
            <person name="Hsuan V.W."/>
            <person name="Iida K."/>
            <person name="Karnes M."/>
            <person name="Khan S."/>
            <person name="Koesema E."/>
            <person name="Ishida J."/>
            <person name="Jiang P.X."/>
            <person name="Jones T."/>
            <person name="Kawai J."/>
            <person name="Kamiya A."/>
            <person name="Meyers C."/>
            <person name="Nakajima M."/>
            <person name="Narusaka M."/>
            <person name="Seki M."/>
            <person name="Sakurai T."/>
            <person name="Satou M."/>
            <person name="Tamse R."/>
            <person name="Vaysberg M."/>
            <person name="Wallender E.K."/>
            <person name="Wong C."/>
            <person name="Yamamura Y."/>
            <person name="Yuan S."/>
            <person name="Shinozaki K."/>
            <person name="Davis R.W."/>
            <person name="Theologis A."/>
            <person name="Ecker J.R."/>
        </authorList>
    </citation>
    <scope>NUCLEOTIDE SEQUENCE [LARGE SCALE MRNA]</scope>
    <source>
        <strain>cv. Columbia</strain>
    </source>
</reference>
<reference key="4">
    <citation type="submission" date="2002-03" db="EMBL/GenBank/DDBJ databases">
        <title>Full-length cDNA from Arabidopsis thaliana.</title>
        <authorList>
            <person name="Brover V.V."/>
            <person name="Troukhan M.E."/>
            <person name="Alexandrov N.A."/>
            <person name="Lu Y.-P."/>
            <person name="Flavell R.B."/>
            <person name="Feldmann K.A."/>
        </authorList>
    </citation>
    <scope>NUCLEOTIDE SEQUENCE [LARGE SCALE MRNA]</scope>
</reference>
<reference key="5">
    <citation type="journal article" date="2001" name="Plant Physiol.">
        <title>The organization of cytoplasmic ribosomal protein genes in the Arabidopsis genome.</title>
        <authorList>
            <person name="Barakat A."/>
            <person name="Szick-Miranda K."/>
            <person name="Chang I.-F."/>
            <person name="Guyot R."/>
            <person name="Blanc G."/>
            <person name="Cooke R."/>
            <person name="Delseny M."/>
            <person name="Bailey-Serres J."/>
        </authorList>
    </citation>
    <scope>GENE FAMILY ORGANIZATION</scope>
    <scope>NOMENCLATURE</scope>
</reference>
<reference key="6">
    <citation type="journal article" date="2023" name="Plant Cell">
        <title>An updated nomenclature for plant ribosomal protein genes.</title>
        <authorList>
            <person name="Scarpin M.R."/>
            <person name="Busche M."/>
            <person name="Martinez R.E."/>
            <person name="Harper L.C."/>
            <person name="Reiser L."/>
            <person name="Szakonyi D."/>
            <person name="Merchante C."/>
            <person name="Lan T."/>
            <person name="Xiong W."/>
            <person name="Mo B."/>
            <person name="Tang G."/>
            <person name="Chen X."/>
            <person name="Bailey-Serres J."/>
            <person name="Browning K.S."/>
            <person name="Brunkard J.O."/>
        </authorList>
    </citation>
    <scope>NOMENCLATURE</scope>
</reference>